<reference key="1">
    <citation type="journal article" date="2002" name="Lancet">
        <title>Genome and virulence determinants of high virulence community-acquired MRSA.</title>
        <authorList>
            <person name="Baba T."/>
            <person name="Takeuchi F."/>
            <person name="Kuroda M."/>
            <person name="Yuzawa H."/>
            <person name="Aoki K."/>
            <person name="Oguchi A."/>
            <person name="Nagai Y."/>
            <person name="Iwama N."/>
            <person name="Asano K."/>
            <person name="Naimi T."/>
            <person name="Kuroda H."/>
            <person name="Cui L."/>
            <person name="Yamamoto K."/>
            <person name="Hiramatsu K."/>
        </authorList>
    </citation>
    <scope>NUCLEOTIDE SEQUENCE [LARGE SCALE GENOMIC DNA]</scope>
    <source>
        <strain>MW2</strain>
    </source>
</reference>
<organism>
    <name type="scientific">Staphylococcus aureus (strain MW2)</name>
    <dbReference type="NCBI Taxonomy" id="196620"/>
    <lineage>
        <taxon>Bacteria</taxon>
        <taxon>Bacillati</taxon>
        <taxon>Bacillota</taxon>
        <taxon>Bacilli</taxon>
        <taxon>Bacillales</taxon>
        <taxon>Staphylococcaceae</taxon>
        <taxon>Staphylococcus</taxon>
    </lineage>
</organism>
<accession>Q7A0X1</accession>
<comment type="catalytic activity">
    <reaction>
        <text>an acyl phosphate + H2O = a carboxylate + phosphate + H(+)</text>
        <dbReference type="Rhea" id="RHEA:14965"/>
        <dbReference type="ChEBI" id="CHEBI:15377"/>
        <dbReference type="ChEBI" id="CHEBI:15378"/>
        <dbReference type="ChEBI" id="CHEBI:29067"/>
        <dbReference type="ChEBI" id="CHEBI:43474"/>
        <dbReference type="ChEBI" id="CHEBI:59918"/>
        <dbReference type="EC" id="3.6.1.7"/>
    </reaction>
</comment>
<comment type="similarity">
    <text evidence="2">Belongs to the acylphosphatase family.</text>
</comment>
<proteinExistence type="inferred from homology"/>
<name>ACYP_STAAW</name>
<dbReference type="EC" id="3.6.1.7"/>
<dbReference type="EMBL" id="BA000033">
    <property type="protein sequence ID" value="BAB95157.1"/>
    <property type="molecule type" value="Genomic_DNA"/>
</dbReference>
<dbReference type="RefSeq" id="WP_001215907.1">
    <property type="nucleotide sequence ID" value="NC_003923.1"/>
</dbReference>
<dbReference type="SMR" id="Q7A0X1"/>
<dbReference type="KEGG" id="sam:MW1292"/>
<dbReference type="HOGENOM" id="CLU_141932_2_1_9"/>
<dbReference type="GO" id="GO:0003998">
    <property type="term" value="F:acylphosphatase activity"/>
    <property type="evidence" value="ECO:0007669"/>
    <property type="project" value="UniProtKB-EC"/>
</dbReference>
<dbReference type="GO" id="GO:0016743">
    <property type="term" value="F:carboxyl- or carbamoyltransferase activity"/>
    <property type="evidence" value="ECO:0007669"/>
    <property type="project" value="TreeGrafter"/>
</dbReference>
<dbReference type="GO" id="GO:0008270">
    <property type="term" value="F:zinc ion binding"/>
    <property type="evidence" value="ECO:0007669"/>
    <property type="project" value="TreeGrafter"/>
</dbReference>
<dbReference type="GO" id="GO:0051604">
    <property type="term" value="P:protein maturation"/>
    <property type="evidence" value="ECO:0007669"/>
    <property type="project" value="TreeGrafter"/>
</dbReference>
<dbReference type="Gene3D" id="3.30.70.100">
    <property type="match status" value="1"/>
</dbReference>
<dbReference type="InterPro" id="IPR001792">
    <property type="entry name" value="Acylphosphatase-like_dom"/>
</dbReference>
<dbReference type="InterPro" id="IPR036046">
    <property type="entry name" value="Acylphosphatase-like_dom_sf"/>
</dbReference>
<dbReference type="InterPro" id="IPR017968">
    <property type="entry name" value="Acylphosphatase_CS"/>
</dbReference>
<dbReference type="InterPro" id="IPR051060">
    <property type="entry name" value="Carbamoyltrans_HypF-like"/>
</dbReference>
<dbReference type="NCBIfam" id="NF011005">
    <property type="entry name" value="PRK14431.1"/>
    <property type="match status" value="1"/>
</dbReference>
<dbReference type="PANTHER" id="PTHR42959">
    <property type="entry name" value="CARBAMOYLTRANSFERASE"/>
    <property type="match status" value="1"/>
</dbReference>
<dbReference type="PANTHER" id="PTHR42959:SF1">
    <property type="entry name" value="CARBAMOYLTRANSFERASE HYPF"/>
    <property type="match status" value="1"/>
</dbReference>
<dbReference type="Pfam" id="PF00708">
    <property type="entry name" value="Acylphosphatase"/>
    <property type="match status" value="1"/>
</dbReference>
<dbReference type="SUPFAM" id="SSF54975">
    <property type="entry name" value="Acylphosphatase/BLUF domain-like"/>
    <property type="match status" value="1"/>
</dbReference>
<dbReference type="PROSITE" id="PS00150">
    <property type="entry name" value="ACYLPHOSPHATASE_1"/>
    <property type="match status" value="1"/>
</dbReference>
<dbReference type="PROSITE" id="PS51160">
    <property type="entry name" value="ACYLPHOSPHATASE_3"/>
    <property type="match status" value="1"/>
</dbReference>
<evidence type="ECO:0000255" key="1">
    <source>
        <dbReference type="PROSITE-ProRule" id="PRU00520"/>
    </source>
</evidence>
<evidence type="ECO:0000305" key="2"/>
<sequence>MRHIHLQVFGRVQGVGFRYFTQRIAMNYNIVGTVQNVDDYVEIYAQGDDADIERFIQGVIEGASPASNVTSHQLEELELNQKLSDFRSI</sequence>
<protein>
    <recommendedName>
        <fullName>Acylphosphatase</fullName>
        <ecNumber>3.6.1.7</ecNumber>
    </recommendedName>
    <alternativeName>
        <fullName>Acylphosphate phosphohydrolase</fullName>
    </alternativeName>
</protein>
<keyword id="KW-0378">Hydrolase</keyword>
<feature type="chain" id="PRO_0000326814" description="Acylphosphatase">
    <location>
        <begin position="1"/>
        <end position="89"/>
    </location>
</feature>
<feature type="domain" description="Acylphosphatase-like" evidence="1">
    <location>
        <begin position="3"/>
        <end position="89"/>
    </location>
</feature>
<feature type="active site" evidence="1">
    <location>
        <position position="18"/>
    </location>
</feature>
<feature type="active site" evidence="1">
    <location>
        <position position="36"/>
    </location>
</feature>
<gene>
    <name type="primary">acyP</name>
    <name type="ordered locus">MW1292</name>
</gene>